<evidence type="ECO:0000250" key="1"/>
<evidence type="ECO:0000255" key="2">
    <source>
        <dbReference type="HAMAP-Rule" id="MF_00100"/>
    </source>
</evidence>
<evidence type="ECO:0000256" key="3">
    <source>
        <dbReference type="SAM" id="MobiDB-lite"/>
    </source>
</evidence>
<gene>
    <name evidence="2" type="primary">infB</name>
    <name type="ordered locus">PsycPRwf_0157</name>
</gene>
<reference key="1">
    <citation type="submission" date="2007-05" db="EMBL/GenBank/DDBJ databases">
        <title>Complete sequence of chromosome of Psychrobacter sp. PRwf-1.</title>
        <authorList>
            <consortium name="US DOE Joint Genome Institute"/>
            <person name="Copeland A."/>
            <person name="Lucas S."/>
            <person name="Lapidus A."/>
            <person name="Barry K."/>
            <person name="Detter J.C."/>
            <person name="Glavina del Rio T."/>
            <person name="Hammon N."/>
            <person name="Israni S."/>
            <person name="Dalin E."/>
            <person name="Tice H."/>
            <person name="Pitluck S."/>
            <person name="Chain P."/>
            <person name="Malfatti S."/>
            <person name="Shin M."/>
            <person name="Vergez L."/>
            <person name="Schmutz J."/>
            <person name="Larimer F."/>
            <person name="Land M."/>
            <person name="Hauser L."/>
            <person name="Kyrpides N."/>
            <person name="Kim E."/>
            <person name="Tiedje J."/>
            <person name="Richardson P."/>
        </authorList>
    </citation>
    <scope>NUCLEOTIDE SEQUENCE [LARGE SCALE GENOMIC DNA]</scope>
    <source>
        <strain>PRwf-1</strain>
    </source>
</reference>
<accession>A5WBS5</accession>
<dbReference type="EMBL" id="CP000713">
    <property type="protein sequence ID" value="ABQ93116.1"/>
    <property type="molecule type" value="Genomic_DNA"/>
</dbReference>
<dbReference type="SMR" id="A5WBS5"/>
<dbReference type="STRING" id="349106.PsycPRwf_0157"/>
<dbReference type="KEGG" id="prw:PsycPRwf_0157"/>
<dbReference type="eggNOG" id="COG0532">
    <property type="taxonomic scope" value="Bacteria"/>
</dbReference>
<dbReference type="HOGENOM" id="CLU_006301_6_3_6"/>
<dbReference type="GO" id="GO:0005829">
    <property type="term" value="C:cytosol"/>
    <property type="evidence" value="ECO:0007669"/>
    <property type="project" value="TreeGrafter"/>
</dbReference>
<dbReference type="GO" id="GO:0005525">
    <property type="term" value="F:GTP binding"/>
    <property type="evidence" value="ECO:0007669"/>
    <property type="project" value="UniProtKB-KW"/>
</dbReference>
<dbReference type="GO" id="GO:0003924">
    <property type="term" value="F:GTPase activity"/>
    <property type="evidence" value="ECO:0007669"/>
    <property type="project" value="UniProtKB-UniRule"/>
</dbReference>
<dbReference type="GO" id="GO:0003743">
    <property type="term" value="F:translation initiation factor activity"/>
    <property type="evidence" value="ECO:0007669"/>
    <property type="project" value="UniProtKB-UniRule"/>
</dbReference>
<dbReference type="CDD" id="cd01887">
    <property type="entry name" value="IF2_eIF5B"/>
    <property type="match status" value="1"/>
</dbReference>
<dbReference type="CDD" id="cd03702">
    <property type="entry name" value="IF2_mtIF2_II"/>
    <property type="match status" value="1"/>
</dbReference>
<dbReference type="CDD" id="cd03692">
    <property type="entry name" value="mtIF2_IVc"/>
    <property type="match status" value="1"/>
</dbReference>
<dbReference type="FunFam" id="2.40.30.10:FF:000007">
    <property type="entry name" value="Translation initiation factor IF-2"/>
    <property type="match status" value="1"/>
</dbReference>
<dbReference type="FunFam" id="2.40.30.10:FF:000008">
    <property type="entry name" value="Translation initiation factor IF-2"/>
    <property type="match status" value="1"/>
</dbReference>
<dbReference type="FunFam" id="3.40.50.10050:FF:000001">
    <property type="entry name" value="Translation initiation factor IF-2"/>
    <property type="match status" value="1"/>
</dbReference>
<dbReference type="FunFam" id="3.40.50.300:FF:000019">
    <property type="entry name" value="Translation initiation factor IF-2"/>
    <property type="match status" value="1"/>
</dbReference>
<dbReference type="Gene3D" id="3.40.50.300">
    <property type="entry name" value="P-loop containing nucleotide triphosphate hydrolases"/>
    <property type="match status" value="1"/>
</dbReference>
<dbReference type="Gene3D" id="3.30.56.50">
    <property type="entry name" value="Putative DNA-binding domain, N-terminal subdomain of bacterial translation initiation factor IF2"/>
    <property type="match status" value="1"/>
</dbReference>
<dbReference type="Gene3D" id="2.40.30.10">
    <property type="entry name" value="Translation factors"/>
    <property type="match status" value="2"/>
</dbReference>
<dbReference type="Gene3D" id="3.40.50.10050">
    <property type="entry name" value="Translation initiation factor IF- 2, domain 3"/>
    <property type="match status" value="1"/>
</dbReference>
<dbReference type="HAMAP" id="MF_00100_B">
    <property type="entry name" value="IF_2_B"/>
    <property type="match status" value="1"/>
</dbReference>
<dbReference type="InterPro" id="IPR009061">
    <property type="entry name" value="DNA-bd_dom_put_sf"/>
</dbReference>
<dbReference type="InterPro" id="IPR053905">
    <property type="entry name" value="EF-G-like_DII"/>
</dbReference>
<dbReference type="InterPro" id="IPR013575">
    <property type="entry name" value="IF2_assoc_dom_bac"/>
</dbReference>
<dbReference type="InterPro" id="IPR044145">
    <property type="entry name" value="IF2_II"/>
</dbReference>
<dbReference type="InterPro" id="IPR006847">
    <property type="entry name" value="IF2_N"/>
</dbReference>
<dbReference type="InterPro" id="IPR027417">
    <property type="entry name" value="P-loop_NTPase"/>
</dbReference>
<dbReference type="InterPro" id="IPR005225">
    <property type="entry name" value="Small_GTP-bd"/>
</dbReference>
<dbReference type="InterPro" id="IPR000795">
    <property type="entry name" value="T_Tr_GTP-bd_dom"/>
</dbReference>
<dbReference type="InterPro" id="IPR000178">
    <property type="entry name" value="TF_IF2_bacterial-like"/>
</dbReference>
<dbReference type="InterPro" id="IPR015760">
    <property type="entry name" value="TIF_IF2"/>
</dbReference>
<dbReference type="InterPro" id="IPR023115">
    <property type="entry name" value="TIF_IF2_dom3"/>
</dbReference>
<dbReference type="InterPro" id="IPR036925">
    <property type="entry name" value="TIF_IF2_dom3_sf"/>
</dbReference>
<dbReference type="InterPro" id="IPR009000">
    <property type="entry name" value="Transl_B-barrel_sf"/>
</dbReference>
<dbReference type="NCBIfam" id="TIGR00487">
    <property type="entry name" value="IF-2"/>
    <property type="match status" value="1"/>
</dbReference>
<dbReference type="NCBIfam" id="TIGR00231">
    <property type="entry name" value="small_GTP"/>
    <property type="match status" value="1"/>
</dbReference>
<dbReference type="PANTHER" id="PTHR43381:SF5">
    <property type="entry name" value="TR-TYPE G DOMAIN-CONTAINING PROTEIN"/>
    <property type="match status" value="1"/>
</dbReference>
<dbReference type="PANTHER" id="PTHR43381">
    <property type="entry name" value="TRANSLATION INITIATION FACTOR IF-2-RELATED"/>
    <property type="match status" value="1"/>
</dbReference>
<dbReference type="Pfam" id="PF22042">
    <property type="entry name" value="EF-G_D2"/>
    <property type="match status" value="1"/>
</dbReference>
<dbReference type="Pfam" id="PF00009">
    <property type="entry name" value="GTP_EFTU"/>
    <property type="match status" value="1"/>
</dbReference>
<dbReference type="Pfam" id="PF11987">
    <property type="entry name" value="IF-2"/>
    <property type="match status" value="1"/>
</dbReference>
<dbReference type="Pfam" id="PF08364">
    <property type="entry name" value="IF2_assoc"/>
    <property type="match status" value="1"/>
</dbReference>
<dbReference type="Pfam" id="PF04760">
    <property type="entry name" value="IF2_N"/>
    <property type="match status" value="1"/>
</dbReference>
<dbReference type="SUPFAM" id="SSF52156">
    <property type="entry name" value="Initiation factor IF2/eIF5b, domain 3"/>
    <property type="match status" value="1"/>
</dbReference>
<dbReference type="SUPFAM" id="SSF52540">
    <property type="entry name" value="P-loop containing nucleoside triphosphate hydrolases"/>
    <property type="match status" value="1"/>
</dbReference>
<dbReference type="SUPFAM" id="SSF46955">
    <property type="entry name" value="Putative DNA-binding domain"/>
    <property type="match status" value="1"/>
</dbReference>
<dbReference type="SUPFAM" id="SSF50447">
    <property type="entry name" value="Translation proteins"/>
    <property type="match status" value="2"/>
</dbReference>
<dbReference type="PROSITE" id="PS51722">
    <property type="entry name" value="G_TR_2"/>
    <property type="match status" value="1"/>
</dbReference>
<dbReference type="PROSITE" id="PS01176">
    <property type="entry name" value="IF2"/>
    <property type="match status" value="1"/>
</dbReference>
<feature type="chain" id="PRO_1000071291" description="Translation initiation factor IF-2">
    <location>
        <begin position="1"/>
        <end position="905"/>
    </location>
</feature>
<feature type="domain" description="tr-type G">
    <location>
        <begin position="406"/>
        <end position="575"/>
    </location>
</feature>
<feature type="region of interest" description="Disordered" evidence="3">
    <location>
        <begin position="52"/>
        <end position="84"/>
    </location>
</feature>
<feature type="region of interest" description="Disordered" evidence="3">
    <location>
        <begin position="116"/>
        <end position="230"/>
    </location>
</feature>
<feature type="region of interest" description="Disordered" evidence="3">
    <location>
        <begin position="269"/>
        <end position="318"/>
    </location>
</feature>
<feature type="region of interest" description="G1" evidence="1">
    <location>
        <begin position="415"/>
        <end position="422"/>
    </location>
</feature>
<feature type="region of interest" description="G2" evidence="1">
    <location>
        <begin position="440"/>
        <end position="444"/>
    </location>
</feature>
<feature type="region of interest" description="G3" evidence="1">
    <location>
        <begin position="461"/>
        <end position="464"/>
    </location>
</feature>
<feature type="region of interest" description="G4" evidence="1">
    <location>
        <begin position="515"/>
        <end position="518"/>
    </location>
</feature>
<feature type="region of interest" description="G5" evidence="1">
    <location>
        <begin position="551"/>
        <end position="553"/>
    </location>
</feature>
<feature type="compositionally biased region" description="Polar residues" evidence="3">
    <location>
        <begin position="65"/>
        <end position="84"/>
    </location>
</feature>
<feature type="compositionally biased region" description="Basic and acidic residues" evidence="3">
    <location>
        <begin position="116"/>
        <end position="138"/>
    </location>
</feature>
<feature type="compositionally biased region" description="Low complexity" evidence="3">
    <location>
        <begin position="165"/>
        <end position="178"/>
    </location>
</feature>
<feature type="compositionally biased region" description="Basic and acidic residues" evidence="3">
    <location>
        <begin position="190"/>
        <end position="230"/>
    </location>
</feature>
<feature type="compositionally biased region" description="Basic and acidic residues" evidence="3">
    <location>
        <begin position="269"/>
        <end position="278"/>
    </location>
</feature>
<feature type="binding site" evidence="2">
    <location>
        <begin position="415"/>
        <end position="422"/>
    </location>
    <ligand>
        <name>GTP</name>
        <dbReference type="ChEBI" id="CHEBI:37565"/>
    </ligand>
</feature>
<feature type="binding site" evidence="2">
    <location>
        <begin position="461"/>
        <end position="465"/>
    </location>
    <ligand>
        <name>GTP</name>
        <dbReference type="ChEBI" id="CHEBI:37565"/>
    </ligand>
</feature>
<feature type="binding site" evidence="2">
    <location>
        <begin position="515"/>
        <end position="518"/>
    </location>
    <ligand>
        <name>GTP</name>
        <dbReference type="ChEBI" id="CHEBI:37565"/>
    </ligand>
</feature>
<keyword id="KW-0963">Cytoplasm</keyword>
<keyword id="KW-0342">GTP-binding</keyword>
<keyword id="KW-0396">Initiation factor</keyword>
<keyword id="KW-0547">Nucleotide-binding</keyword>
<keyword id="KW-0648">Protein biosynthesis</keyword>
<name>IF2_PSYWF</name>
<proteinExistence type="inferred from homology"/>
<protein>
    <recommendedName>
        <fullName evidence="2">Translation initiation factor IF-2</fullName>
    </recommendedName>
</protein>
<comment type="function">
    <text evidence="2">One of the essential components for the initiation of protein synthesis. Protects formylmethionyl-tRNA from spontaneous hydrolysis and promotes its binding to the 30S ribosomal subunits. Also involved in the hydrolysis of GTP during the formation of the 70S ribosomal complex.</text>
</comment>
<comment type="subcellular location">
    <subcellularLocation>
        <location evidence="2">Cytoplasm</location>
    </subcellularLocation>
</comment>
<comment type="similarity">
    <text evidence="2">Belongs to the TRAFAC class translation factor GTPase superfamily. Classic translation factor GTPase family. IF-2 subfamily.</text>
</comment>
<organism>
    <name type="scientific">Psychrobacter sp. (strain PRwf-1)</name>
    <dbReference type="NCBI Taxonomy" id="349106"/>
    <lineage>
        <taxon>Bacteria</taxon>
        <taxon>Pseudomonadati</taxon>
        <taxon>Pseudomonadota</taxon>
        <taxon>Gammaproteobacteria</taxon>
        <taxon>Moraxellales</taxon>
        <taxon>Moraxellaceae</taxon>
        <taxon>Psychrobacter</taxon>
    </lineage>
</organism>
<sequence>MADKTVKELADMVSKTVSAVQKQLTDAGLPARGEDDLVTELEQEQLVAFLKQSHGQKEKRRISLKSKTTSTARVTGSSGKSKSVNVEVRKKKVFEKPDPNKLAEEIAAREQAALEAKKRAEEEAKKREQVKKEAEERQAATLAAMRANLGGGSSSSDKKEELSTVVVKKGSKAAAAAKEAPKKKVAQTKPKVETAAERKARETREAEEERLRQIEAETRRKQAEEAQKKTLEQMRKMAGKYSDKDPVAEVRKDEPLAEGLVGEALEESFEKERREIKRGSASTATRGRRRKGQEEREIRNRKHGLKSSQASQHKFEKPVEKIVHDVEIGEQIVVSDLAQRMAVKAREVTKLLMKMGEIVSADQEIDQATASLIVEEMGHNPIPVSDTKVEDDLQEAVEERRSNVQTRPPVVTIMGHVDHGKTSLLDKIRETKVATGEAGGITQHIGAYHVETDRGVITFLDTPGHAAFTAMRSRGAQATDIVILVVAADDGMMPQTEEAIDHARASGTPLIVAINKMDKSTADPDRVLNELTTKEVVTEAWGGDVPMAKISAKTGEGIDELLELINLQAELMELEAPTDGAAQGVVIESRLEKGRGAVASILVKKGTLNQGDLVLAGEFYGKVRAMTDETGKRVKSAGPSIPVEILGLPDTPAAGSEFLVVSDEKKAREVAEFRATRERERQLERQNKMRLESMFEQMGQDDLSFLNIILKTDVRGTLEALLAALEDLSTDEVKVKVISSGVGPIAESDVTLAESSEAVLLGFNVRADNAAKRKADEAGIDIRYYSVIYGLIDDVKAAMSGMLSPEHREKILGIAEVRDVFRSSKFGAAAGCMVVEGTIYRNKSIRVLRDDKVAFTGQLQSLRRYKDDVNEVRSGMECGLAVRGYDVEVGDKIEVFEIQEIQRTI</sequence>